<accession>Q9LSF6</accession>
<accession>Q94JS5</accession>
<protein>
    <recommendedName>
        <fullName evidence="9">Vacuolar iron transporter homolog 2.1</fullName>
    </recommendedName>
    <alternativeName>
        <fullName evidence="7">Protein NODULIN-LIKE 21</fullName>
    </alternativeName>
    <alternativeName>
        <fullName evidence="8">Vacuolar iron transporter-like 5</fullName>
        <shortName evidence="8">AtVTL5</shortName>
    </alternativeName>
</protein>
<dbReference type="EMBL" id="AB026647">
    <property type="protein sequence ID" value="BAB02079.1"/>
    <property type="molecule type" value="Genomic_DNA"/>
</dbReference>
<dbReference type="EMBL" id="CP002686">
    <property type="protein sequence ID" value="AEE76991.1"/>
    <property type="molecule type" value="Genomic_DNA"/>
</dbReference>
<dbReference type="EMBL" id="AF375396">
    <property type="protein sequence ID" value="AAK52980.1"/>
    <property type="status" value="ALT_FRAME"/>
    <property type="molecule type" value="mRNA"/>
</dbReference>
<dbReference type="EMBL" id="AY066047">
    <property type="protein sequence ID" value="AAL47414.1"/>
    <property type="molecule type" value="mRNA"/>
</dbReference>
<dbReference type="RefSeq" id="NP_189156.1">
    <property type="nucleotide sequence ID" value="NM_113425.2"/>
</dbReference>
<dbReference type="SMR" id="Q9LSF6"/>
<dbReference type="BioGRID" id="7443">
    <property type="interactions" value="3"/>
</dbReference>
<dbReference type="FunCoup" id="Q9LSF6">
    <property type="interactions" value="26"/>
</dbReference>
<dbReference type="IntAct" id="Q9LSF6">
    <property type="interactions" value="4"/>
</dbReference>
<dbReference type="STRING" id="3702.Q9LSF6"/>
<dbReference type="TCDB" id="2.A.89.3.5">
    <property type="family name" value="the vacuolar iron transporter (vit) family"/>
</dbReference>
<dbReference type="iPTMnet" id="Q9LSF6"/>
<dbReference type="PaxDb" id="3702-AT3G25190.1"/>
<dbReference type="ProteomicsDB" id="242761"/>
<dbReference type="EnsemblPlants" id="AT3G25190.1">
    <property type="protein sequence ID" value="AT3G25190.1"/>
    <property type="gene ID" value="AT3G25190"/>
</dbReference>
<dbReference type="GeneID" id="822112"/>
<dbReference type="Gramene" id="AT3G25190.1">
    <property type="protein sequence ID" value="AT3G25190.1"/>
    <property type="gene ID" value="AT3G25190"/>
</dbReference>
<dbReference type="KEGG" id="ath:AT3G25190"/>
<dbReference type="Araport" id="AT3G25190"/>
<dbReference type="TAIR" id="AT3G25190">
    <property type="gene designation" value="VTL5"/>
</dbReference>
<dbReference type="eggNOG" id="KOG4473">
    <property type="taxonomic scope" value="Eukaryota"/>
</dbReference>
<dbReference type="HOGENOM" id="CLU_038957_5_1_1"/>
<dbReference type="InParanoid" id="Q9LSF6"/>
<dbReference type="OMA" id="ERTQWIR"/>
<dbReference type="PhylomeDB" id="Q9LSF6"/>
<dbReference type="PRO" id="PR:Q9LSF6"/>
<dbReference type="Proteomes" id="UP000006548">
    <property type="component" value="Chromosome 3"/>
</dbReference>
<dbReference type="ExpressionAtlas" id="Q9LSF6">
    <property type="expression patterns" value="baseline and differential"/>
</dbReference>
<dbReference type="GO" id="GO:0005774">
    <property type="term" value="C:vacuolar membrane"/>
    <property type="evidence" value="ECO:0007669"/>
    <property type="project" value="UniProtKB-SubCell"/>
</dbReference>
<dbReference type="GO" id="GO:0005381">
    <property type="term" value="F:iron ion transmembrane transporter activity"/>
    <property type="evidence" value="ECO:0000315"/>
    <property type="project" value="UniProtKB"/>
</dbReference>
<dbReference type="GO" id="GO:0005384">
    <property type="term" value="F:manganese ion transmembrane transporter activity"/>
    <property type="evidence" value="ECO:0007669"/>
    <property type="project" value="InterPro"/>
</dbReference>
<dbReference type="GO" id="GO:0006879">
    <property type="term" value="P:intracellular iron ion homeostasis"/>
    <property type="evidence" value="ECO:0000314"/>
    <property type="project" value="UniProtKB"/>
</dbReference>
<dbReference type="GO" id="GO:0030026">
    <property type="term" value="P:intracellular manganese ion homeostasis"/>
    <property type="evidence" value="ECO:0007669"/>
    <property type="project" value="InterPro"/>
</dbReference>
<dbReference type="GO" id="GO:0010039">
    <property type="term" value="P:response to iron ion"/>
    <property type="evidence" value="ECO:0000270"/>
    <property type="project" value="TAIR"/>
</dbReference>
<dbReference type="InterPro" id="IPR008217">
    <property type="entry name" value="Ccc1_fam"/>
</dbReference>
<dbReference type="PANTHER" id="PTHR31851">
    <property type="entry name" value="FE(2+)/MN(2+) TRANSPORTER PCL1"/>
    <property type="match status" value="1"/>
</dbReference>
<dbReference type="Pfam" id="PF01988">
    <property type="entry name" value="VIT1"/>
    <property type="match status" value="2"/>
</dbReference>
<feature type="initiator methionine" description="Removed" evidence="12">
    <location>
        <position position="1"/>
    </location>
</feature>
<feature type="chain" id="PRO_0000411009" description="Vacuolar iron transporter homolog 2.1">
    <location>
        <begin position="2"/>
        <end position="219"/>
    </location>
</feature>
<feature type="topological domain" description="Cytoplasmic" evidence="2">
    <location>
        <begin position="2"/>
        <end position="37"/>
    </location>
</feature>
<feature type="transmembrane region" description="Helical" evidence="2">
    <location>
        <begin position="38"/>
        <end position="58"/>
    </location>
</feature>
<feature type="topological domain" description="Vacuolar" evidence="2">
    <location>
        <begin position="59"/>
        <end position="67"/>
    </location>
</feature>
<feature type="transmembrane region" description="Helical" evidence="2">
    <location>
        <begin position="68"/>
        <end position="88"/>
    </location>
</feature>
<feature type="topological domain" description="Cytoplasmic" evidence="2">
    <location>
        <begin position="89"/>
        <end position="133"/>
    </location>
</feature>
<feature type="transmembrane region" description="Helical" evidence="2">
    <location>
        <begin position="134"/>
        <end position="154"/>
    </location>
</feature>
<feature type="topological domain" description="Vacuolar" evidence="2">
    <location>
        <begin position="155"/>
        <end position="161"/>
    </location>
</feature>
<feature type="transmembrane region" description="Helical" evidence="2">
    <location>
        <begin position="162"/>
        <end position="182"/>
    </location>
</feature>
<feature type="topological domain" description="Cytoplasmic" evidence="2">
    <location>
        <begin position="183"/>
        <end position="193"/>
    </location>
</feature>
<feature type="transmembrane region" description="Helical" evidence="2">
    <location>
        <begin position="194"/>
        <end position="214"/>
    </location>
</feature>
<feature type="topological domain" description="Vacuolar" evidence="2">
    <location>
        <begin position="215"/>
        <end position="219"/>
    </location>
</feature>
<feature type="region of interest" description="Disordered" evidence="3">
    <location>
        <begin position="1"/>
        <end position="26"/>
    </location>
</feature>
<feature type="compositionally biased region" description="Polar residues" evidence="3">
    <location>
        <begin position="1"/>
        <end position="15"/>
    </location>
</feature>
<feature type="modified residue" description="N-acetylthreonine" evidence="12">
    <location>
        <position position="2"/>
    </location>
</feature>
<name>VTH21_ARATH</name>
<reference key="1">
    <citation type="journal article" date="2000" name="DNA Res.">
        <title>Structural analysis of Arabidopsis thaliana chromosome 3. I. Sequence features of the regions of 4,504,864 bp covered by sixty P1 and TAC clones.</title>
        <authorList>
            <person name="Sato S."/>
            <person name="Nakamura Y."/>
            <person name="Kaneko T."/>
            <person name="Katoh T."/>
            <person name="Asamizu E."/>
            <person name="Tabata S."/>
        </authorList>
    </citation>
    <scope>NUCLEOTIDE SEQUENCE [LARGE SCALE GENOMIC DNA]</scope>
    <source>
        <strain>cv. Columbia</strain>
    </source>
</reference>
<reference key="2">
    <citation type="journal article" date="2017" name="Plant J.">
        <title>Araport11: a complete reannotation of the Arabidopsis thaliana reference genome.</title>
        <authorList>
            <person name="Cheng C.Y."/>
            <person name="Krishnakumar V."/>
            <person name="Chan A.P."/>
            <person name="Thibaud-Nissen F."/>
            <person name="Schobel S."/>
            <person name="Town C.D."/>
        </authorList>
    </citation>
    <scope>GENOME REANNOTATION</scope>
    <source>
        <strain>cv. Columbia</strain>
    </source>
</reference>
<reference key="3">
    <citation type="journal article" date="2003" name="Science">
        <title>Empirical analysis of transcriptional activity in the Arabidopsis genome.</title>
        <authorList>
            <person name="Yamada K."/>
            <person name="Lim J."/>
            <person name="Dale J.M."/>
            <person name="Chen H."/>
            <person name="Shinn P."/>
            <person name="Palm C.J."/>
            <person name="Southwick A.M."/>
            <person name="Wu H.C."/>
            <person name="Kim C.J."/>
            <person name="Nguyen M."/>
            <person name="Pham P.K."/>
            <person name="Cheuk R.F."/>
            <person name="Karlin-Newmann G."/>
            <person name="Liu S.X."/>
            <person name="Lam B."/>
            <person name="Sakano H."/>
            <person name="Wu T."/>
            <person name="Yu G."/>
            <person name="Miranda M."/>
            <person name="Quach H.L."/>
            <person name="Tripp M."/>
            <person name="Chang C.H."/>
            <person name="Lee J.M."/>
            <person name="Toriumi M.J."/>
            <person name="Chan M.M."/>
            <person name="Tang C.C."/>
            <person name="Onodera C.S."/>
            <person name="Deng J.M."/>
            <person name="Akiyama K."/>
            <person name="Ansari Y."/>
            <person name="Arakawa T."/>
            <person name="Banh J."/>
            <person name="Banno F."/>
            <person name="Bowser L."/>
            <person name="Brooks S.Y."/>
            <person name="Carninci P."/>
            <person name="Chao Q."/>
            <person name="Choy N."/>
            <person name="Enju A."/>
            <person name="Goldsmith A.D."/>
            <person name="Gurjal M."/>
            <person name="Hansen N.F."/>
            <person name="Hayashizaki Y."/>
            <person name="Johnson-Hopson C."/>
            <person name="Hsuan V.W."/>
            <person name="Iida K."/>
            <person name="Karnes M."/>
            <person name="Khan S."/>
            <person name="Koesema E."/>
            <person name="Ishida J."/>
            <person name="Jiang P.X."/>
            <person name="Jones T."/>
            <person name="Kawai J."/>
            <person name="Kamiya A."/>
            <person name="Meyers C."/>
            <person name="Nakajima M."/>
            <person name="Narusaka M."/>
            <person name="Seki M."/>
            <person name="Sakurai T."/>
            <person name="Satou M."/>
            <person name="Tamse R."/>
            <person name="Vaysberg M."/>
            <person name="Wallender E.K."/>
            <person name="Wong C."/>
            <person name="Yamamura Y."/>
            <person name="Yuan S."/>
            <person name="Shinozaki K."/>
            <person name="Davis R.W."/>
            <person name="Theologis A."/>
            <person name="Ecker J.R."/>
        </authorList>
    </citation>
    <scope>NUCLEOTIDE SEQUENCE [LARGE SCALE MRNA]</scope>
    <source>
        <strain>cv. Columbia</strain>
    </source>
</reference>
<reference key="4">
    <citation type="journal article" date="2006" name="Genetics">
        <title>An Arabidopsis basic helix-loop-helix leucine zipper protein modulates metal homeostasis and auxin conjugate responsiveness.</title>
        <authorList>
            <person name="Rampey R.A."/>
            <person name="Woodward A.W."/>
            <person name="Hobbs B.N."/>
            <person name="Tierney M.P."/>
            <person name="Lahner B."/>
            <person name="Salt D.E."/>
            <person name="Bartel B."/>
        </authorList>
    </citation>
    <scope>TISSUE SPECIFICITY</scope>
</reference>
<reference key="5">
    <citation type="journal article" date="2011" name="Plant Physiol. Biochem.">
        <title>Members of a small family of nodulin-like genes are regulated under iron deficiency in roots of Arabidopsis thaliana.</title>
        <authorList>
            <person name="Gollhofer J."/>
            <person name="Schlaewicke C."/>
            <person name="Jungnick N."/>
            <person name="Schmidt W."/>
            <person name="Buckhout T.J."/>
        </authorList>
    </citation>
    <scope>FUNCTION</scope>
    <scope>INDUCTION</scope>
    <scope>DISRUPTION PHENOTYPE</scope>
</reference>
<reference key="6">
    <citation type="journal article" date="2012" name="Mol. Cell. Proteomics">
        <title>Comparative large-scale characterisation of plant vs. mammal proteins reveals similar and idiosyncratic N-alpha acetylation features.</title>
        <authorList>
            <person name="Bienvenut W.V."/>
            <person name="Sumpton D."/>
            <person name="Martinez A."/>
            <person name="Lilla S."/>
            <person name="Espagne C."/>
            <person name="Meinnel T."/>
            <person name="Giglione C."/>
        </authorList>
    </citation>
    <scope>ACETYLATION [LARGE SCALE ANALYSIS] AT THR-2</scope>
    <scope>CLEAVAGE OF INITIATOR METHIONINE [LARGE SCALE ANALYSIS]</scope>
    <scope>IDENTIFICATION BY MASS SPECTROMETRY [LARGE SCALE ANALYSIS]</scope>
</reference>
<reference key="7">
    <citation type="journal article" date="2014" name="PLoS ONE">
        <title>Vacuolar-Iron-Transporter1-Like proteins mediate iron homeostasis in Arabidopsis.</title>
        <authorList>
            <person name="Gollhofer J."/>
            <person name="Timofeev R."/>
            <person name="Lan P."/>
            <person name="Schmidt W."/>
            <person name="Buckhout T.J."/>
        </authorList>
    </citation>
    <scope>FUNCTION</scope>
    <scope>TRANSPORTER ACTIVITY</scope>
    <scope>INDUCTION</scope>
</reference>
<comment type="function">
    <text evidence="6">Vacuolar iron transporter involved in the transfer of iron ions from the cytosol to the vacuole for intracellular iron storage (PubMed:25360591). Involved in regulation of cellular iron homeostasis (PubMed:25360591). Vacuolar iron storage is required for seed embryo and seedling development (PubMed:25360591).</text>
</comment>
<comment type="catalytic activity">
    <reaction evidence="6">
        <text>Fe(2+)(in) = Fe(2+)(out)</text>
        <dbReference type="Rhea" id="RHEA:28486"/>
        <dbReference type="ChEBI" id="CHEBI:29033"/>
    </reaction>
    <physiologicalReaction direction="left-to-right" evidence="9">
        <dbReference type="Rhea" id="RHEA:28487"/>
    </physiologicalReaction>
</comment>
<comment type="subcellular location">
    <subcellularLocation>
        <location evidence="1">Vacuole membrane</location>
        <topology evidence="2">Multi-pass membrane protein</topology>
    </subcellularLocation>
</comment>
<comment type="tissue specificity">
    <text evidence="4">Highly expressed in roots. inflorescences and at lower levels in leaves.</text>
</comment>
<comment type="induction">
    <text evidence="5 6">Down-regulated under iron deficiency (PubMed:21411332, PubMed:25360591). Induced by iron supply (PubMed:25360591).</text>
</comment>
<comment type="disruption phenotype">
    <text evidence="5">No visible phenotype under normal growth condition, but decreased accumulation of iron in the root when grown under high iron concentration.</text>
</comment>
<comment type="miscellaneous">
    <text evidence="6">Can mediate sequestration of iron ions into vacuoles when expressed in the yeast ccc1 mutant.</text>
</comment>
<comment type="similarity">
    <text evidence="9">Belongs to the CCC1 family.</text>
</comment>
<comment type="sequence caution" evidence="9">
    <conflict type="frameshift">
        <sequence resource="EMBL-CDS" id="AAK52980"/>
    </conflict>
</comment>
<proteinExistence type="evidence at protein level"/>
<keyword id="KW-0007">Acetylation</keyword>
<keyword id="KW-0406">Ion transport</keyword>
<keyword id="KW-0408">Iron</keyword>
<keyword id="KW-0410">Iron transport</keyword>
<keyword id="KW-0472">Membrane</keyword>
<keyword id="KW-1185">Reference proteome</keyword>
<keyword id="KW-0812">Transmembrane</keyword>
<keyword id="KW-1133">Transmembrane helix</keyword>
<keyword id="KW-0813">Transport</keyword>
<keyword id="KW-0926">Vacuole</keyword>
<gene>
    <name evidence="8" type="primary">VTL5</name>
    <name evidence="10" type="ordered locus">At3g25190</name>
    <name evidence="11" type="ORF">MJL12.26</name>
</gene>
<evidence type="ECO:0000250" key="1">
    <source>
        <dbReference type="UniProtKB" id="Q9LPU9"/>
    </source>
</evidence>
<evidence type="ECO:0000255" key="2"/>
<evidence type="ECO:0000256" key="3">
    <source>
        <dbReference type="SAM" id="MobiDB-lite"/>
    </source>
</evidence>
<evidence type="ECO:0000269" key="4">
    <source>
    </source>
</evidence>
<evidence type="ECO:0000269" key="5">
    <source>
    </source>
</evidence>
<evidence type="ECO:0000269" key="6">
    <source>
    </source>
</evidence>
<evidence type="ECO:0000303" key="7">
    <source>
    </source>
</evidence>
<evidence type="ECO:0000303" key="8">
    <source>
    </source>
</evidence>
<evidence type="ECO:0000305" key="9"/>
<evidence type="ECO:0000312" key="10">
    <source>
        <dbReference type="Araport" id="AT3G25190"/>
    </source>
</evidence>
<evidence type="ECO:0000312" key="11">
    <source>
        <dbReference type="EMBL" id="BAB02079.1"/>
    </source>
</evidence>
<evidence type="ECO:0007744" key="12">
    <source>
    </source>
</evidence>
<organism>
    <name type="scientific">Arabidopsis thaliana</name>
    <name type="common">Mouse-ear cress</name>
    <dbReference type="NCBI Taxonomy" id="3702"/>
    <lineage>
        <taxon>Eukaryota</taxon>
        <taxon>Viridiplantae</taxon>
        <taxon>Streptophyta</taxon>
        <taxon>Embryophyta</taxon>
        <taxon>Tracheophyta</taxon>
        <taxon>Spermatophyta</taxon>
        <taxon>Magnoliopsida</taxon>
        <taxon>eudicotyledons</taxon>
        <taxon>Gunneridae</taxon>
        <taxon>Pentapetalae</taxon>
        <taxon>rosids</taxon>
        <taxon>malvids</taxon>
        <taxon>Brassicales</taxon>
        <taxon>Brassicaceae</taxon>
        <taxon>Camelineae</taxon>
        <taxon>Arabidopsis</taxon>
    </lineage>
</organism>
<sequence>MTSNVQLSETNSPRNQKTRPRAEKEEVDYMQRAQWLRAALLGANDGLVTVASLMMGVGSIKEDVKAMLLVGFAGLVAGACSMAIGEFVSVCTQRDIETAQMKRAIEHKTSLSAIDEQEEEEKKERLPNPGQAAIASALAFSVGAAMPLLGAVFIENHKVRMVVVAVVATIALVVFGVTGAVLGKTSVVKSSVRVVIGGWMAMALTFGLTKFIGSAAMQI</sequence>